<name>SP2AB_LYSSH</name>
<keyword id="KW-0067">ATP-binding</keyword>
<keyword id="KW-0418">Kinase</keyword>
<keyword id="KW-0547">Nucleotide-binding</keyword>
<keyword id="KW-0723">Serine/threonine-protein kinase</keyword>
<keyword id="KW-0749">Sporulation</keyword>
<keyword id="KW-0808">Transferase</keyword>
<comment type="function">
    <text evidence="1">Binds to sigma F and blocks its ability to form an RNA polymerase holoenzyme (E-sigma F). Phosphorylates SpoIIAA on a serine residue. This phosphorylation may enable SpoIIAA to act as an anti-anti-sigma factor that counteracts SpoIIAB and thus releases sigma F from inhibition.</text>
</comment>
<comment type="catalytic activity">
    <reaction evidence="1">
        <text>L-seryl-[protein] + ATP = O-phospho-L-seryl-[protein] + ADP + H(+)</text>
        <dbReference type="Rhea" id="RHEA:17989"/>
        <dbReference type="Rhea" id="RHEA-COMP:9863"/>
        <dbReference type="Rhea" id="RHEA-COMP:11604"/>
        <dbReference type="ChEBI" id="CHEBI:15378"/>
        <dbReference type="ChEBI" id="CHEBI:29999"/>
        <dbReference type="ChEBI" id="CHEBI:30616"/>
        <dbReference type="ChEBI" id="CHEBI:83421"/>
        <dbReference type="ChEBI" id="CHEBI:456216"/>
        <dbReference type="EC" id="2.7.11.1"/>
    </reaction>
</comment>
<comment type="catalytic activity">
    <reaction evidence="1">
        <text>L-threonyl-[protein] + ATP = O-phospho-L-threonyl-[protein] + ADP + H(+)</text>
        <dbReference type="Rhea" id="RHEA:46608"/>
        <dbReference type="Rhea" id="RHEA-COMP:11060"/>
        <dbReference type="Rhea" id="RHEA-COMP:11605"/>
        <dbReference type="ChEBI" id="CHEBI:15378"/>
        <dbReference type="ChEBI" id="CHEBI:30013"/>
        <dbReference type="ChEBI" id="CHEBI:30616"/>
        <dbReference type="ChEBI" id="CHEBI:61977"/>
        <dbReference type="ChEBI" id="CHEBI:456216"/>
        <dbReference type="EC" id="2.7.11.1"/>
    </reaction>
</comment>
<comment type="similarity">
    <text evidence="1">Belongs to the anti-sigma-factor family.</text>
</comment>
<reference key="1">
    <citation type="journal article" date="1997" name="Gene">
        <title>Sequencing and phylogenetic analysis of the spoIIA operon from diverse Bacillus and Paenibacillus species.</title>
        <authorList>
            <person name="Park S.G."/>
            <person name="Yudkin M.D."/>
        </authorList>
    </citation>
    <scope>NUCLEOTIDE SEQUENCE [GENOMIC DNA]</scope>
    <source>
        <strain>2362</strain>
    </source>
</reference>
<feature type="chain" id="PRO_0000203558" description="Anti-sigma F factor">
    <location>
        <begin position="1"/>
        <end position="146"/>
    </location>
</feature>
<evidence type="ECO:0000255" key="1">
    <source>
        <dbReference type="HAMAP-Rule" id="MF_00637"/>
    </source>
</evidence>
<dbReference type="EC" id="2.7.11.1" evidence="1"/>
<dbReference type="EMBL" id="L47359">
    <property type="protein sequence ID" value="AAB81190.1"/>
    <property type="molecule type" value="Genomic_DNA"/>
</dbReference>
<dbReference type="SMR" id="O32724"/>
<dbReference type="STRING" id="1421.A2J09_02160"/>
<dbReference type="GO" id="GO:0005524">
    <property type="term" value="F:ATP binding"/>
    <property type="evidence" value="ECO:0007669"/>
    <property type="project" value="UniProtKB-KW"/>
</dbReference>
<dbReference type="GO" id="GO:0106310">
    <property type="term" value="F:protein serine kinase activity"/>
    <property type="evidence" value="ECO:0007669"/>
    <property type="project" value="RHEA"/>
</dbReference>
<dbReference type="GO" id="GO:0004674">
    <property type="term" value="F:protein serine/threonine kinase activity"/>
    <property type="evidence" value="ECO:0007669"/>
    <property type="project" value="UniProtKB-KW"/>
</dbReference>
<dbReference type="GO" id="GO:0016989">
    <property type="term" value="F:sigma factor antagonist activity"/>
    <property type="evidence" value="ECO:0007669"/>
    <property type="project" value="InterPro"/>
</dbReference>
<dbReference type="GO" id="GO:0030436">
    <property type="term" value="P:asexual sporulation"/>
    <property type="evidence" value="ECO:0007669"/>
    <property type="project" value="UniProtKB-UniRule"/>
</dbReference>
<dbReference type="GO" id="GO:0042174">
    <property type="term" value="P:negative regulation of sporulation resulting in formation of a cellular spore"/>
    <property type="evidence" value="ECO:0007669"/>
    <property type="project" value="InterPro"/>
</dbReference>
<dbReference type="GO" id="GO:0030435">
    <property type="term" value="P:sporulation resulting in formation of a cellular spore"/>
    <property type="evidence" value="ECO:0007669"/>
    <property type="project" value="UniProtKB-KW"/>
</dbReference>
<dbReference type="CDD" id="cd16942">
    <property type="entry name" value="HATPase_SpoIIAB-like"/>
    <property type="match status" value="1"/>
</dbReference>
<dbReference type="Gene3D" id="3.30.565.10">
    <property type="entry name" value="Histidine kinase-like ATPase, C-terminal domain"/>
    <property type="match status" value="1"/>
</dbReference>
<dbReference type="HAMAP" id="MF_00637">
    <property type="entry name" value="Anti_sigma_F"/>
    <property type="match status" value="1"/>
</dbReference>
<dbReference type="InterPro" id="IPR050267">
    <property type="entry name" value="Anti-sigma-factor_SerPK"/>
</dbReference>
<dbReference type="InterPro" id="IPR010194">
    <property type="entry name" value="Anti-sigma_F"/>
</dbReference>
<dbReference type="InterPro" id="IPR036890">
    <property type="entry name" value="HATPase_C_sf"/>
</dbReference>
<dbReference type="NCBIfam" id="TIGR01925">
    <property type="entry name" value="spIIAB"/>
    <property type="match status" value="1"/>
</dbReference>
<dbReference type="PANTHER" id="PTHR35526:SF3">
    <property type="entry name" value="ANTI-SIGMA-F FACTOR RSBW"/>
    <property type="match status" value="1"/>
</dbReference>
<dbReference type="PANTHER" id="PTHR35526">
    <property type="entry name" value="ANTI-SIGMA-F FACTOR RSBW-RELATED"/>
    <property type="match status" value="1"/>
</dbReference>
<dbReference type="Pfam" id="PF13581">
    <property type="entry name" value="HATPase_c_2"/>
    <property type="match status" value="1"/>
</dbReference>
<dbReference type="SMART" id="SM00387">
    <property type="entry name" value="HATPase_c"/>
    <property type="match status" value="1"/>
</dbReference>
<dbReference type="SUPFAM" id="SSF55874">
    <property type="entry name" value="ATPase domain of HSP90 chaperone/DNA topoisomerase II/histidine kinase"/>
    <property type="match status" value="1"/>
</dbReference>
<sequence>MDNEMTLTFLALSENEALARVAVTGFIAQLDPTIDELSEFKTVVSEAVSNAIIHGYEEDGKGVVTVHAKREDDVVTVSVMHKGIGIEDVSQAMEPLFTTKSVMERSGMGFTIMDSFSDQLTVMSKWREGTTVTFTKKFYTVRTAVM</sequence>
<accession>O32724</accession>
<proteinExistence type="inferred from homology"/>
<gene>
    <name evidence="1" type="primary">spoIIAB</name>
</gene>
<protein>
    <recommendedName>
        <fullName evidence="1">Anti-sigma F factor</fullName>
        <ecNumber evidence="1">2.7.11.1</ecNumber>
    </recommendedName>
    <alternativeName>
        <fullName evidence="1">Stage II sporulation protein AB</fullName>
    </alternativeName>
</protein>
<organism>
    <name type="scientific">Lysinibacillus sphaericus</name>
    <name type="common">Bacillus sphaericus</name>
    <dbReference type="NCBI Taxonomy" id="1421"/>
    <lineage>
        <taxon>Bacteria</taxon>
        <taxon>Bacillati</taxon>
        <taxon>Bacillota</taxon>
        <taxon>Bacilli</taxon>
        <taxon>Bacillales</taxon>
        <taxon>Bacillaceae</taxon>
        <taxon>Lysinibacillus</taxon>
    </lineage>
</organism>